<proteinExistence type="inferred from homology"/>
<protein>
    <recommendedName>
        <fullName evidence="1">Glutamate--cysteine ligase</fullName>
        <ecNumber evidence="1">6.3.2.2</ecNumber>
    </recommendedName>
    <alternativeName>
        <fullName evidence="1">Gamma-ECS</fullName>
        <shortName evidence="1">GCS</shortName>
    </alternativeName>
    <alternativeName>
        <fullName evidence="1">Gamma-glutamylcysteine synthetase</fullName>
    </alternativeName>
</protein>
<evidence type="ECO:0000255" key="1">
    <source>
        <dbReference type="HAMAP-Rule" id="MF_00578"/>
    </source>
</evidence>
<dbReference type="EC" id="6.3.2.2" evidence="1"/>
<dbReference type="EMBL" id="CP001164">
    <property type="protein sequence ID" value="ACI36720.1"/>
    <property type="molecule type" value="Genomic_DNA"/>
</dbReference>
<dbReference type="RefSeq" id="WP_000611787.1">
    <property type="nucleotide sequence ID" value="NC_011353.1"/>
</dbReference>
<dbReference type="SMR" id="B5Z2A3"/>
<dbReference type="KEGG" id="ecf:ECH74115_3934"/>
<dbReference type="HOGENOM" id="CLU_020728_3_0_6"/>
<dbReference type="UniPathway" id="UPA00142">
    <property type="reaction ID" value="UER00209"/>
</dbReference>
<dbReference type="GO" id="GO:0005829">
    <property type="term" value="C:cytosol"/>
    <property type="evidence" value="ECO:0007669"/>
    <property type="project" value="TreeGrafter"/>
</dbReference>
<dbReference type="GO" id="GO:0005524">
    <property type="term" value="F:ATP binding"/>
    <property type="evidence" value="ECO:0007669"/>
    <property type="project" value="UniProtKB-KW"/>
</dbReference>
<dbReference type="GO" id="GO:0004357">
    <property type="term" value="F:glutamate-cysteine ligase activity"/>
    <property type="evidence" value="ECO:0007669"/>
    <property type="project" value="UniProtKB-UniRule"/>
</dbReference>
<dbReference type="GO" id="GO:0046872">
    <property type="term" value="F:metal ion binding"/>
    <property type="evidence" value="ECO:0007669"/>
    <property type="project" value="TreeGrafter"/>
</dbReference>
<dbReference type="GO" id="GO:0006750">
    <property type="term" value="P:glutathione biosynthetic process"/>
    <property type="evidence" value="ECO:0007669"/>
    <property type="project" value="UniProtKB-UniRule"/>
</dbReference>
<dbReference type="FunFam" id="3.30.590.20:FF:000001">
    <property type="entry name" value="Glutamate--cysteine ligase"/>
    <property type="match status" value="1"/>
</dbReference>
<dbReference type="Gene3D" id="3.30.590.20">
    <property type="match status" value="1"/>
</dbReference>
<dbReference type="HAMAP" id="MF_00578">
    <property type="entry name" value="Glu_cys_ligase"/>
    <property type="match status" value="1"/>
</dbReference>
<dbReference type="InterPro" id="IPR014746">
    <property type="entry name" value="Gln_synth/guanido_kin_cat_dom"/>
</dbReference>
<dbReference type="InterPro" id="IPR007370">
    <property type="entry name" value="Glu_cys_ligase"/>
</dbReference>
<dbReference type="InterPro" id="IPR006334">
    <property type="entry name" value="Glut_cys_ligase"/>
</dbReference>
<dbReference type="NCBIfam" id="TIGR01434">
    <property type="entry name" value="glu_cys_ligase"/>
    <property type="match status" value="1"/>
</dbReference>
<dbReference type="PANTHER" id="PTHR38761">
    <property type="entry name" value="GLUTAMATE--CYSTEINE LIGASE"/>
    <property type="match status" value="1"/>
</dbReference>
<dbReference type="PANTHER" id="PTHR38761:SF1">
    <property type="entry name" value="GLUTAMATE--CYSTEINE LIGASE"/>
    <property type="match status" value="1"/>
</dbReference>
<dbReference type="Pfam" id="PF04262">
    <property type="entry name" value="Glu_cys_ligase"/>
    <property type="match status" value="1"/>
</dbReference>
<dbReference type="SUPFAM" id="SSF55931">
    <property type="entry name" value="Glutamine synthetase/guanido kinase"/>
    <property type="match status" value="1"/>
</dbReference>
<name>GSH1_ECO5E</name>
<comment type="catalytic activity">
    <reaction evidence="1">
        <text>L-cysteine + L-glutamate + ATP = gamma-L-glutamyl-L-cysteine + ADP + phosphate + H(+)</text>
        <dbReference type="Rhea" id="RHEA:13285"/>
        <dbReference type="ChEBI" id="CHEBI:15378"/>
        <dbReference type="ChEBI" id="CHEBI:29985"/>
        <dbReference type="ChEBI" id="CHEBI:30616"/>
        <dbReference type="ChEBI" id="CHEBI:35235"/>
        <dbReference type="ChEBI" id="CHEBI:43474"/>
        <dbReference type="ChEBI" id="CHEBI:58173"/>
        <dbReference type="ChEBI" id="CHEBI:456216"/>
        <dbReference type="EC" id="6.3.2.2"/>
    </reaction>
</comment>
<comment type="pathway">
    <text evidence="1">Sulfur metabolism; glutathione biosynthesis; glutathione from L-cysteine and L-glutamate: step 1/2.</text>
</comment>
<comment type="similarity">
    <text evidence="1">Belongs to the glutamate--cysteine ligase type 1 family. Type 1 subfamily.</text>
</comment>
<reference key="1">
    <citation type="journal article" date="2011" name="Proc. Natl. Acad. Sci. U.S.A.">
        <title>Genomic anatomy of Escherichia coli O157:H7 outbreaks.</title>
        <authorList>
            <person name="Eppinger M."/>
            <person name="Mammel M.K."/>
            <person name="Leclerc J.E."/>
            <person name="Ravel J."/>
            <person name="Cebula T.A."/>
        </authorList>
    </citation>
    <scope>NUCLEOTIDE SEQUENCE [LARGE SCALE GENOMIC DNA]</scope>
    <source>
        <strain>EC4115 / EHEC</strain>
    </source>
</reference>
<accession>B5Z2A3</accession>
<gene>
    <name evidence="1" type="primary">gshA</name>
    <name type="ordered locus">ECH74115_3934</name>
</gene>
<organism>
    <name type="scientific">Escherichia coli O157:H7 (strain EC4115 / EHEC)</name>
    <dbReference type="NCBI Taxonomy" id="444450"/>
    <lineage>
        <taxon>Bacteria</taxon>
        <taxon>Pseudomonadati</taxon>
        <taxon>Pseudomonadota</taxon>
        <taxon>Gammaproteobacteria</taxon>
        <taxon>Enterobacterales</taxon>
        <taxon>Enterobacteriaceae</taxon>
        <taxon>Escherichia</taxon>
    </lineage>
</organism>
<keyword id="KW-0067">ATP-binding</keyword>
<keyword id="KW-0317">Glutathione biosynthesis</keyword>
<keyword id="KW-0436">Ligase</keyword>
<keyword id="KW-0547">Nucleotide-binding</keyword>
<sequence length="518" mass="58255">MIPDVSQALAWLEKHPQALKGIQRGLERETLRVNADGTLATTGHPEALGSALTHKWITTDFAEALLEFITPVDGDIEHMLTFMRDLHRYTARNMGDERMWPLSMPCYIAEGQDIELAQYGTSNTGRFKTLYREGLKNRYGALMQTISGVHYNFSLPMAFWQAKCGDISGADAKEKISAGYFRVIRNYYRFGWVIPYLFGASPAICSSFLQGKPTSLPFEKTECGMYYLPYATSLRLSDLGYTNKSQSNLGITFNDLYEYVAGLKQAIKTPSEEYAKIGIDKDGKRLQINSNVLQIENELYAPIRPKRVTRSGESPSDALLRGGIEYIEVRSLDINPFSPIGVDEQQVRFLDLFMVWCALADAPEMSSSELACTRVNWNRVILEGRKPGLTLGIGCETAQFPLPQVGKDLFRDLKRVAQTLDSINGGEAYQKVCDELVACFDNPDLTFSARILRSMIDTGIGGTGKAFAEAYRNLLREEPLEILREEDFVAEREASERRQQEMEAADTEPFAVWLEKHA</sequence>
<feature type="chain" id="PRO_1000129588" description="Glutamate--cysteine ligase">
    <location>
        <begin position="1"/>
        <end position="518"/>
    </location>
</feature>